<dbReference type="EC" id="3.5.3.8" evidence="1"/>
<dbReference type="EMBL" id="M34604">
    <property type="protein sequence ID" value="AAA25074.1"/>
    <property type="molecule type" value="Genomic_DNA"/>
</dbReference>
<dbReference type="SMR" id="P19452"/>
<dbReference type="STRING" id="548.EAG7_02611"/>
<dbReference type="UniPathway" id="UPA00379">
    <property type="reaction ID" value="UER00552"/>
</dbReference>
<dbReference type="GO" id="GO:0008783">
    <property type="term" value="F:agmatinase activity"/>
    <property type="evidence" value="ECO:0007669"/>
    <property type="project" value="TreeGrafter"/>
</dbReference>
<dbReference type="GO" id="GO:0050415">
    <property type="term" value="F:formimidoylglutamase activity"/>
    <property type="evidence" value="ECO:0007669"/>
    <property type="project" value="UniProtKB-EC"/>
</dbReference>
<dbReference type="GO" id="GO:0046872">
    <property type="term" value="F:metal ion binding"/>
    <property type="evidence" value="ECO:0007669"/>
    <property type="project" value="UniProtKB-KW"/>
</dbReference>
<dbReference type="GO" id="GO:0019556">
    <property type="term" value="P:L-histidine catabolic process to glutamate and formamide"/>
    <property type="evidence" value="ECO:0007669"/>
    <property type="project" value="UniProtKB-UniPathway"/>
</dbReference>
<dbReference type="GO" id="GO:0019557">
    <property type="term" value="P:L-histidine catabolic process to glutamate and formate"/>
    <property type="evidence" value="ECO:0007669"/>
    <property type="project" value="UniProtKB-UniPathway"/>
</dbReference>
<dbReference type="GO" id="GO:0033389">
    <property type="term" value="P:putrescine biosynthetic process from arginine, via agmatine"/>
    <property type="evidence" value="ECO:0007669"/>
    <property type="project" value="TreeGrafter"/>
</dbReference>
<dbReference type="CDD" id="cd09988">
    <property type="entry name" value="Formimidoylglutamase"/>
    <property type="match status" value="1"/>
</dbReference>
<dbReference type="Gene3D" id="3.40.800.10">
    <property type="entry name" value="Ureohydrolase domain"/>
    <property type="match status" value="1"/>
</dbReference>
<dbReference type="InterPro" id="IPR006035">
    <property type="entry name" value="Ureohydrolase"/>
</dbReference>
<dbReference type="InterPro" id="IPR023696">
    <property type="entry name" value="Ureohydrolase_dom_sf"/>
</dbReference>
<dbReference type="InterPro" id="IPR020855">
    <property type="entry name" value="Ureohydrolase_Mn_BS"/>
</dbReference>
<dbReference type="PANTHER" id="PTHR11358">
    <property type="entry name" value="ARGINASE/AGMATINASE"/>
    <property type="match status" value="1"/>
</dbReference>
<dbReference type="PANTHER" id="PTHR11358:SF35">
    <property type="entry name" value="FORMIMIDOYLGLUTAMASE"/>
    <property type="match status" value="1"/>
</dbReference>
<dbReference type="Pfam" id="PF00491">
    <property type="entry name" value="Arginase"/>
    <property type="match status" value="1"/>
</dbReference>
<dbReference type="PIRSF" id="PIRSF036979">
    <property type="entry name" value="Arginase"/>
    <property type="match status" value="1"/>
</dbReference>
<dbReference type="PRINTS" id="PR00116">
    <property type="entry name" value="ARGINASE"/>
</dbReference>
<dbReference type="SUPFAM" id="SSF52768">
    <property type="entry name" value="Arginase/deacetylase"/>
    <property type="match status" value="1"/>
</dbReference>
<dbReference type="PROSITE" id="PS01053">
    <property type="entry name" value="ARGINASE_1"/>
    <property type="match status" value="1"/>
</dbReference>
<dbReference type="PROSITE" id="PS51409">
    <property type="entry name" value="ARGINASE_2"/>
    <property type="match status" value="1"/>
</dbReference>
<sequence length="222" mass="24158">VDGEQLEAAHQALREAVADCQRAGKRTLVLGGGHETAFGHGAGVLDAFPGEKVGIINLDAHLDLRFADCASSGTPFRQLALECDAQQRGFHYTCIGVSRAANTQALWDEAARRQVAIVEDLEVLTAFETRVLPELERNIAQFDRLYLTIDLDVLPAREMPAVSAPAALGVPLGTLLRIVEPLCRSGKLQAVDLVEFNPLFDIDGQGARAAARVAWQIAHWWR</sequence>
<reference key="1">
    <citation type="journal article" date="1990" name="J. Bacteriol.">
        <title>Nucleotide sequence of the gene encoding the repressor for the histidine utilization genes of Klebsiella aerogenes.</title>
        <authorList>
            <person name="Schwacha A."/>
            <person name="Bender R.A."/>
        </authorList>
    </citation>
    <scope>NUCLEOTIDE SEQUENCE [GENOMIC DNA]</scope>
</reference>
<accession>P19452</accession>
<comment type="function">
    <text evidence="1">Catalyzes the conversion of N-formimidoyl-L-glutamate to L-glutamate and formamide.</text>
</comment>
<comment type="catalytic activity">
    <reaction evidence="1">
        <text>N-formimidoyl-L-glutamate + H2O = formamide + L-glutamate</text>
        <dbReference type="Rhea" id="RHEA:22492"/>
        <dbReference type="ChEBI" id="CHEBI:15377"/>
        <dbReference type="ChEBI" id="CHEBI:16397"/>
        <dbReference type="ChEBI" id="CHEBI:29985"/>
        <dbReference type="ChEBI" id="CHEBI:58928"/>
        <dbReference type="EC" id="3.5.3.8"/>
    </reaction>
</comment>
<comment type="cofactor">
    <cofactor evidence="1">
        <name>Mn(2+)</name>
        <dbReference type="ChEBI" id="CHEBI:29035"/>
    </cofactor>
    <text evidence="1">Binds 2 manganese ions per subunit.</text>
</comment>
<comment type="pathway">
    <text evidence="1">Amino-acid degradation; L-histidine degradation into L-glutamate; L-glutamate from N-formimidoyl-L-glutamate (hydrolase route): step 1/1.</text>
</comment>
<comment type="similarity">
    <text evidence="2">Belongs to the arginase family.</text>
</comment>
<protein>
    <recommendedName>
        <fullName evidence="1">Formimidoylglutamase</fullName>
        <ecNumber evidence="1">3.5.3.8</ecNumber>
    </recommendedName>
    <alternativeName>
        <fullName evidence="1">Formiminoglutamase</fullName>
    </alternativeName>
    <alternativeName>
        <fullName evidence="1">Formiminoglutamate hydrolase</fullName>
    </alternativeName>
    <alternativeName>
        <fullName>Histidine utilization protein G</fullName>
    </alternativeName>
</protein>
<feature type="chain" id="PRO_0000173756" description="Formimidoylglutamase">
    <location>
        <begin position="1" status="less than"/>
        <end position="222"/>
    </location>
</feature>
<feature type="binding site" evidence="1">
    <location>
        <position position="34"/>
    </location>
    <ligand>
        <name>Mn(2+)</name>
        <dbReference type="ChEBI" id="CHEBI:29035"/>
        <label>1</label>
    </ligand>
</feature>
<feature type="binding site" evidence="1">
    <location>
        <position position="59"/>
    </location>
    <ligand>
        <name>Mn(2+)</name>
        <dbReference type="ChEBI" id="CHEBI:29035"/>
        <label>1</label>
    </ligand>
</feature>
<feature type="binding site" evidence="1">
    <location>
        <position position="59"/>
    </location>
    <ligand>
        <name>Mn(2+)</name>
        <dbReference type="ChEBI" id="CHEBI:29035"/>
        <label>2</label>
    </ligand>
</feature>
<feature type="binding site" evidence="1">
    <location>
        <position position="61"/>
    </location>
    <ligand>
        <name>Mn(2+)</name>
        <dbReference type="ChEBI" id="CHEBI:29035"/>
        <label>2</label>
    </ligand>
</feature>
<feature type="binding site" evidence="1">
    <location>
        <position position="63"/>
    </location>
    <ligand>
        <name>Mn(2+)</name>
        <dbReference type="ChEBI" id="CHEBI:29035"/>
        <label>1</label>
    </ligand>
</feature>
<feature type="binding site" evidence="1">
    <location>
        <position position="150"/>
    </location>
    <ligand>
        <name>Mn(2+)</name>
        <dbReference type="ChEBI" id="CHEBI:29035"/>
        <label>1</label>
    </ligand>
</feature>
<feature type="binding site" evidence="1">
    <location>
        <position position="150"/>
    </location>
    <ligand>
        <name>Mn(2+)</name>
        <dbReference type="ChEBI" id="CHEBI:29035"/>
        <label>2</label>
    </ligand>
</feature>
<feature type="binding site" evidence="1">
    <location>
        <position position="152"/>
    </location>
    <ligand>
        <name>Mn(2+)</name>
        <dbReference type="ChEBI" id="CHEBI:29035"/>
        <label>2</label>
    </ligand>
</feature>
<feature type="non-terminal residue">
    <location>
        <position position="1"/>
    </location>
</feature>
<keyword id="KW-0369">Histidine metabolism</keyword>
<keyword id="KW-0378">Hydrolase</keyword>
<keyword id="KW-0464">Manganese</keyword>
<keyword id="KW-0479">Metal-binding</keyword>
<proteinExistence type="inferred from homology"/>
<evidence type="ECO:0000250" key="1">
    <source>
        <dbReference type="UniProtKB" id="P42068"/>
    </source>
</evidence>
<evidence type="ECO:0000305" key="2"/>
<gene>
    <name type="primary">hutG</name>
</gene>
<name>HUTG_KLEAE</name>
<organism>
    <name type="scientific">Klebsiella aerogenes</name>
    <name type="common">Enterobacter aerogenes</name>
    <dbReference type="NCBI Taxonomy" id="548"/>
    <lineage>
        <taxon>Bacteria</taxon>
        <taxon>Pseudomonadati</taxon>
        <taxon>Pseudomonadota</taxon>
        <taxon>Gammaproteobacteria</taxon>
        <taxon>Enterobacterales</taxon>
        <taxon>Enterobacteriaceae</taxon>
        <taxon>Klebsiella/Raoultella group</taxon>
        <taxon>Klebsiella</taxon>
    </lineage>
</organism>